<reference key="1">
    <citation type="journal article" date="2001" name="Nature">
        <title>Complete genome sequence of Salmonella enterica serovar Typhimurium LT2.</title>
        <authorList>
            <person name="McClelland M."/>
            <person name="Sanderson K.E."/>
            <person name="Spieth J."/>
            <person name="Clifton S.W."/>
            <person name="Latreille P."/>
            <person name="Courtney L."/>
            <person name="Porwollik S."/>
            <person name="Ali J."/>
            <person name="Dante M."/>
            <person name="Du F."/>
            <person name="Hou S."/>
            <person name="Layman D."/>
            <person name="Leonard S."/>
            <person name="Nguyen C."/>
            <person name="Scott K."/>
            <person name="Holmes A."/>
            <person name="Grewal N."/>
            <person name="Mulvaney E."/>
            <person name="Ryan E."/>
            <person name="Sun H."/>
            <person name="Florea L."/>
            <person name="Miller W."/>
            <person name="Stoneking T."/>
            <person name="Nhan M."/>
            <person name="Waterston R."/>
            <person name="Wilson R.K."/>
        </authorList>
    </citation>
    <scope>NUCLEOTIDE SEQUENCE [LARGE SCALE GENOMIC DNA]</scope>
    <source>
        <strain>LT2 / SGSC1412 / ATCC 700720</strain>
    </source>
</reference>
<accession>P0A7P8</accession>
<accession>P02437</accession>
<sequence length="46" mass="5380">MKRTFQPSVLKRNRSHGFRARMATKNGRQVLARRRAKGRARLTVSK</sequence>
<comment type="similarity">
    <text evidence="1">Belongs to the bacterial ribosomal protein bL34 family.</text>
</comment>
<protein>
    <recommendedName>
        <fullName evidence="1">Large ribosomal subunit protein bL34</fullName>
    </recommendedName>
    <alternativeName>
        <fullName>50S ribosomal protein L34</fullName>
    </alternativeName>
</protein>
<proteinExistence type="inferred from homology"/>
<gene>
    <name type="primary">rpmH</name>
    <name type="synonym">rimA</name>
    <name type="synonym">ssaF</name>
    <name type="ordered locus">STM3839</name>
</gene>
<organism>
    <name type="scientific">Salmonella typhimurium (strain LT2 / SGSC1412 / ATCC 700720)</name>
    <dbReference type="NCBI Taxonomy" id="99287"/>
    <lineage>
        <taxon>Bacteria</taxon>
        <taxon>Pseudomonadati</taxon>
        <taxon>Pseudomonadota</taxon>
        <taxon>Gammaproteobacteria</taxon>
        <taxon>Enterobacterales</taxon>
        <taxon>Enterobacteriaceae</taxon>
        <taxon>Salmonella</taxon>
    </lineage>
</organism>
<dbReference type="EMBL" id="AE006468">
    <property type="protein sequence ID" value="AAL22698.1"/>
    <property type="molecule type" value="Genomic_DNA"/>
</dbReference>
<dbReference type="RefSeq" id="NP_462739.1">
    <property type="nucleotide sequence ID" value="NC_003197.2"/>
</dbReference>
<dbReference type="RefSeq" id="WP_000831330.1">
    <property type="nucleotide sequence ID" value="NC_003197.2"/>
</dbReference>
<dbReference type="SMR" id="P0A7P8"/>
<dbReference type="STRING" id="99287.STM3839"/>
<dbReference type="PaxDb" id="99287-STM3839"/>
<dbReference type="GeneID" id="1255366"/>
<dbReference type="GeneID" id="98190980"/>
<dbReference type="KEGG" id="stm:STM3839"/>
<dbReference type="PATRIC" id="fig|99287.12.peg.4066"/>
<dbReference type="HOGENOM" id="CLU_129938_2_1_6"/>
<dbReference type="PhylomeDB" id="P0A7P8"/>
<dbReference type="BioCyc" id="SENT99287:STM3839-MONOMER"/>
<dbReference type="Proteomes" id="UP000001014">
    <property type="component" value="Chromosome"/>
</dbReference>
<dbReference type="GO" id="GO:1990904">
    <property type="term" value="C:ribonucleoprotein complex"/>
    <property type="evidence" value="ECO:0007669"/>
    <property type="project" value="UniProtKB-KW"/>
</dbReference>
<dbReference type="GO" id="GO:0005840">
    <property type="term" value="C:ribosome"/>
    <property type="evidence" value="ECO:0007669"/>
    <property type="project" value="UniProtKB-KW"/>
</dbReference>
<dbReference type="GO" id="GO:0003735">
    <property type="term" value="F:structural constituent of ribosome"/>
    <property type="evidence" value="ECO:0007669"/>
    <property type="project" value="InterPro"/>
</dbReference>
<dbReference type="GO" id="GO:0006412">
    <property type="term" value="P:translation"/>
    <property type="evidence" value="ECO:0007669"/>
    <property type="project" value="UniProtKB-UniRule"/>
</dbReference>
<dbReference type="FunFam" id="1.10.287.3980:FF:000001">
    <property type="entry name" value="Mitochondrial ribosomal protein L34"/>
    <property type="match status" value="1"/>
</dbReference>
<dbReference type="Gene3D" id="1.10.287.3980">
    <property type="match status" value="1"/>
</dbReference>
<dbReference type="HAMAP" id="MF_00391">
    <property type="entry name" value="Ribosomal_bL34"/>
    <property type="match status" value="1"/>
</dbReference>
<dbReference type="InterPro" id="IPR000271">
    <property type="entry name" value="Ribosomal_bL34"/>
</dbReference>
<dbReference type="InterPro" id="IPR020939">
    <property type="entry name" value="Ribosomal_bL34_CS"/>
</dbReference>
<dbReference type="NCBIfam" id="TIGR01030">
    <property type="entry name" value="rpmH_bact"/>
    <property type="match status" value="1"/>
</dbReference>
<dbReference type="PANTHER" id="PTHR14503:SF4">
    <property type="entry name" value="LARGE RIBOSOMAL SUBUNIT PROTEIN BL34M"/>
    <property type="match status" value="1"/>
</dbReference>
<dbReference type="PANTHER" id="PTHR14503">
    <property type="entry name" value="MITOCHONDRIAL RIBOSOMAL PROTEIN 34 FAMILY MEMBER"/>
    <property type="match status" value="1"/>
</dbReference>
<dbReference type="Pfam" id="PF00468">
    <property type="entry name" value="Ribosomal_L34"/>
    <property type="match status" value="1"/>
</dbReference>
<dbReference type="PROSITE" id="PS00784">
    <property type="entry name" value="RIBOSOMAL_L34"/>
    <property type="match status" value="1"/>
</dbReference>
<evidence type="ECO:0000305" key="1"/>
<keyword id="KW-1185">Reference proteome</keyword>
<keyword id="KW-0687">Ribonucleoprotein</keyword>
<keyword id="KW-0689">Ribosomal protein</keyword>
<feature type="chain" id="PRO_0000187456" description="Large ribosomal subunit protein bL34">
    <location>
        <begin position="1"/>
        <end position="46"/>
    </location>
</feature>
<name>RL34_SALTY</name>